<feature type="chain" id="PRO_0000096847" description="PSME3-interacting protein">
    <location>
        <begin position="1"/>
        <end position="254"/>
    </location>
</feature>
<feature type="region of interest" description="Disordered" evidence="2">
    <location>
        <begin position="22"/>
        <end position="52"/>
    </location>
</feature>
<feature type="region of interest" description="Disordered" evidence="2">
    <location>
        <begin position="155"/>
        <end position="195"/>
    </location>
</feature>
<feature type="region of interest" description="Interaction with PSME3" evidence="3">
    <location>
        <begin position="201"/>
        <end position="254"/>
    </location>
</feature>
<feature type="compositionally biased region" description="Basic and acidic residues" evidence="2">
    <location>
        <begin position="22"/>
        <end position="39"/>
    </location>
</feature>
<feature type="compositionally biased region" description="Basic and acidic residues" evidence="2">
    <location>
        <begin position="171"/>
        <end position="182"/>
    </location>
</feature>
<feature type="compositionally biased region" description="Polar residues" evidence="2">
    <location>
        <begin position="183"/>
        <end position="195"/>
    </location>
</feature>
<feature type="modified residue" description="N-acetylmethionine" evidence="7 9 10">
    <location>
        <position position="1"/>
    </location>
</feature>
<feature type="modified residue" description="Phosphoserine" evidence="11">
    <location>
        <position position="17"/>
    </location>
</feature>
<feature type="modified residue" description="N6-acetyllysine" evidence="8">
    <location>
        <position position="139"/>
    </location>
</feature>
<feature type="modified residue" description="Phosphoserine; by CK2" evidence="3">
    <location>
        <position position="222"/>
    </location>
</feature>
<feature type="modified residue" description="Phosphoserine; by CK2" evidence="3">
    <location>
        <position position="228"/>
    </location>
</feature>
<feature type="mutagenesis site" description="Reduces phosphorylation by CK2 and interaction with PSME3; when associated with A-228." evidence="3">
    <original>S</original>
    <variation>A</variation>
    <location>
        <position position="222"/>
    </location>
</feature>
<feature type="mutagenesis site" description="Abolishes phosphorylation by CK2, strongly reduces interaction with PSME3 and abolishes effect on proteasome activity." evidence="3">
    <original>DSE</original>
    <variation>KSK</variation>
    <location>
        <begin position="223"/>
        <end position="225"/>
    </location>
</feature>
<feature type="mutagenesis site" description="Reduces phosphorylation by CK2 and interaction with PSME3; when associated with A-222." evidence="3">
    <original>S</original>
    <variation>A</variation>
    <location>
        <position position="228"/>
    </location>
</feature>
<feature type="mutagenesis site" description="Strongly reduces phosphorylation by CK2 and interaction with PSME3." evidence="3">
    <original>DSE</original>
    <variation>KSK</variation>
    <location>
        <begin position="229"/>
        <end position="231"/>
    </location>
</feature>
<evidence type="ECO:0000250" key="1">
    <source>
        <dbReference type="UniProtKB" id="Q91WE2"/>
    </source>
</evidence>
<evidence type="ECO:0000256" key="2">
    <source>
        <dbReference type="SAM" id="MobiDB-lite"/>
    </source>
</evidence>
<evidence type="ECO:0000269" key="3">
    <source>
    </source>
</evidence>
<evidence type="ECO:0000303" key="4">
    <source>
    </source>
</evidence>
<evidence type="ECO:0000305" key="5"/>
<evidence type="ECO:0000312" key="6">
    <source>
        <dbReference type="HGNC" id="HGNC:29856"/>
    </source>
</evidence>
<evidence type="ECO:0007744" key="7">
    <source>
    </source>
</evidence>
<evidence type="ECO:0007744" key="8">
    <source>
    </source>
</evidence>
<evidence type="ECO:0007744" key="9">
    <source>
    </source>
</evidence>
<evidence type="ECO:0007744" key="10">
    <source>
    </source>
</evidence>
<evidence type="ECO:0007744" key="11">
    <source>
    </source>
</evidence>
<sequence>MDGGDDGNLIIKKRFVSEAELDERRKRRQEEWEKVRKPEDPEECPEEVYDPRSLYERLQEQKDRKQQEYEEQFKFKNMVRGLDEDETNFLDEVSRQQELIEKQRREEELKELKEYRNNLKKVGISQENKKEVEKKLTVKPIETKNKFSQAKLLAGAVKHKSSESGNSVKRLKPDPEPDDKNQEPSSCKSLGNTSLSGPSIHCPSAAVCIGILPGLGAYSGSSDSESSSDSEGTINATGKIVSSIFRTNTFLEAP</sequence>
<keyword id="KW-0002">3D-structure</keyword>
<keyword id="KW-0007">Acetylation</keyword>
<keyword id="KW-0539">Nucleus</keyword>
<keyword id="KW-0597">Phosphoprotein</keyword>
<keyword id="KW-1267">Proteomics identification</keyword>
<keyword id="KW-1185">Reference proteome</keyword>
<reference key="1">
    <citation type="submission" date="2001-03" db="EMBL/GenBank/DDBJ databases">
        <authorList>
            <person name="Barnikol-Watanabe S."/>
            <person name="Barnikol H.U."/>
            <person name="Kroll K."/>
            <person name="Hirschfeld G."/>
            <person name="Schwarzer C."/>
        </authorList>
    </citation>
    <scope>NUCLEOTIDE SEQUENCE [MRNA]</scope>
</reference>
<reference key="2">
    <citation type="submission" date="1999-12" db="EMBL/GenBank/DDBJ databases">
        <title>A novel gene expressed in human pheochromocytoma.</title>
        <authorList>
            <person name="Li Y."/>
            <person name="Huang Q."/>
            <person name="Peng Y."/>
            <person name="Song H."/>
            <person name="Yu Y."/>
            <person name="Xu S."/>
            <person name="Ren S."/>
            <person name="Chen Z."/>
            <person name="Han Z."/>
        </authorList>
    </citation>
    <scope>NUCLEOTIDE SEQUENCE [LARGE SCALE MRNA]</scope>
    <source>
        <tissue>Pheochromocytoma</tissue>
    </source>
</reference>
<reference key="3">
    <citation type="journal article" date="2004" name="Nat. Genet.">
        <title>Complete sequencing and characterization of 21,243 full-length human cDNAs.</title>
        <authorList>
            <person name="Ota T."/>
            <person name="Suzuki Y."/>
            <person name="Nishikawa T."/>
            <person name="Otsuki T."/>
            <person name="Sugiyama T."/>
            <person name="Irie R."/>
            <person name="Wakamatsu A."/>
            <person name="Hayashi K."/>
            <person name="Sato H."/>
            <person name="Nagai K."/>
            <person name="Kimura K."/>
            <person name="Makita H."/>
            <person name="Sekine M."/>
            <person name="Obayashi M."/>
            <person name="Nishi T."/>
            <person name="Shibahara T."/>
            <person name="Tanaka T."/>
            <person name="Ishii S."/>
            <person name="Yamamoto J."/>
            <person name="Saito K."/>
            <person name="Kawai Y."/>
            <person name="Isono Y."/>
            <person name="Nakamura Y."/>
            <person name="Nagahari K."/>
            <person name="Murakami K."/>
            <person name="Yasuda T."/>
            <person name="Iwayanagi T."/>
            <person name="Wagatsuma M."/>
            <person name="Shiratori A."/>
            <person name="Sudo H."/>
            <person name="Hosoiri T."/>
            <person name="Kaku Y."/>
            <person name="Kodaira H."/>
            <person name="Kondo H."/>
            <person name="Sugawara M."/>
            <person name="Takahashi M."/>
            <person name="Kanda K."/>
            <person name="Yokoi T."/>
            <person name="Furuya T."/>
            <person name="Kikkawa E."/>
            <person name="Omura Y."/>
            <person name="Abe K."/>
            <person name="Kamihara K."/>
            <person name="Katsuta N."/>
            <person name="Sato K."/>
            <person name="Tanikawa M."/>
            <person name="Yamazaki M."/>
            <person name="Ninomiya K."/>
            <person name="Ishibashi T."/>
            <person name="Yamashita H."/>
            <person name="Murakawa K."/>
            <person name="Fujimori K."/>
            <person name="Tanai H."/>
            <person name="Kimata M."/>
            <person name="Watanabe M."/>
            <person name="Hiraoka S."/>
            <person name="Chiba Y."/>
            <person name="Ishida S."/>
            <person name="Ono Y."/>
            <person name="Takiguchi S."/>
            <person name="Watanabe S."/>
            <person name="Yosida M."/>
            <person name="Hotuta T."/>
            <person name="Kusano J."/>
            <person name="Kanehori K."/>
            <person name="Takahashi-Fujii A."/>
            <person name="Hara H."/>
            <person name="Tanase T.-O."/>
            <person name="Nomura Y."/>
            <person name="Togiya S."/>
            <person name="Komai F."/>
            <person name="Hara R."/>
            <person name="Takeuchi K."/>
            <person name="Arita M."/>
            <person name="Imose N."/>
            <person name="Musashino K."/>
            <person name="Yuuki H."/>
            <person name="Oshima A."/>
            <person name="Sasaki N."/>
            <person name="Aotsuka S."/>
            <person name="Yoshikawa Y."/>
            <person name="Matsunawa H."/>
            <person name="Ichihara T."/>
            <person name="Shiohata N."/>
            <person name="Sano S."/>
            <person name="Moriya S."/>
            <person name="Momiyama H."/>
            <person name="Satoh N."/>
            <person name="Takami S."/>
            <person name="Terashima Y."/>
            <person name="Suzuki O."/>
            <person name="Nakagawa S."/>
            <person name="Senoh A."/>
            <person name="Mizoguchi H."/>
            <person name="Goto Y."/>
            <person name="Shimizu F."/>
            <person name="Wakebe H."/>
            <person name="Hishigaki H."/>
            <person name="Watanabe T."/>
            <person name="Sugiyama A."/>
            <person name="Takemoto M."/>
            <person name="Kawakami B."/>
            <person name="Yamazaki M."/>
            <person name="Watanabe K."/>
            <person name="Kumagai A."/>
            <person name="Itakura S."/>
            <person name="Fukuzumi Y."/>
            <person name="Fujimori Y."/>
            <person name="Komiyama M."/>
            <person name="Tashiro H."/>
            <person name="Tanigami A."/>
            <person name="Fujiwara T."/>
            <person name="Ono T."/>
            <person name="Yamada K."/>
            <person name="Fujii Y."/>
            <person name="Ozaki K."/>
            <person name="Hirao M."/>
            <person name="Ohmori Y."/>
            <person name="Kawabata A."/>
            <person name="Hikiji T."/>
            <person name="Kobatake N."/>
            <person name="Inagaki H."/>
            <person name="Ikema Y."/>
            <person name="Okamoto S."/>
            <person name="Okitani R."/>
            <person name="Kawakami T."/>
            <person name="Noguchi S."/>
            <person name="Itoh T."/>
            <person name="Shigeta K."/>
            <person name="Senba T."/>
            <person name="Matsumura K."/>
            <person name="Nakajima Y."/>
            <person name="Mizuno T."/>
            <person name="Morinaga M."/>
            <person name="Sasaki M."/>
            <person name="Togashi T."/>
            <person name="Oyama M."/>
            <person name="Hata H."/>
            <person name="Watanabe M."/>
            <person name="Komatsu T."/>
            <person name="Mizushima-Sugano J."/>
            <person name="Satoh T."/>
            <person name="Shirai Y."/>
            <person name="Takahashi Y."/>
            <person name="Nakagawa K."/>
            <person name="Okumura K."/>
            <person name="Nagase T."/>
            <person name="Nomura N."/>
            <person name="Kikuchi H."/>
            <person name="Masuho Y."/>
            <person name="Yamashita R."/>
            <person name="Nakai K."/>
            <person name="Yada T."/>
            <person name="Nakamura Y."/>
            <person name="Ohara O."/>
            <person name="Isogai T."/>
            <person name="Sugano S."/>
        </authorList>
    </citation>
    <scope>NUCLEOTIDE SEQUENCE [LARGE SCALE MRNA]</scope>
    <source>
        <tissue>Ovary</tissue>
    </source>
</reference>
<reference key="4">
    <citation type="journal article" date="2007" name="BMC Genomics">
        <title>The full-ORF clone resource of the German cDNA consortium.</title>
        <authorList>
            <person name="Bechtel S."/>
            <person name="Rosenfelder H."/>
            <person name="Duda A."/>
            <person name="Schmidt C.P."/>
            <person name="Ernst U."/>
            <person name="Wellenreuther R."/>
            <person name="Mehrle A."/>
            <person name="Schuster C."/>
            <person name="Bahr A."/>
            <person name="Bloecker H."/>
            <person name="Heubner D."/>
            <person name="Hoerlein A."/>
            <person name="Michel G."/>
            <person name="Wedler H."/>
            <person name="Koehrer K."/>
            <person name="Ottenwaelder B."/>
            <person name="Poustka A."/>
            <person name="Wiemann S."/>
            <person name="Schupp I."/>
        </authorList>
    </citation>
    <scope>NUCLEOTIDE SEQUENCE [LARGE SCALE MRNA]</scope>
    <source>
        <tissue>Lymph node</tissue>
    </source>
</reference>
<reference key="5">
    <citation type="journal article" date="2004" name="Genome Res.">
        <title>The status, quality, and expansion of the NIH full-length cDNA project: the Mammalian Gene Collection (MGC).</title>
        <authorList>
            <consortium name="The MGC Project Team"/>
        </authorList>
    </citation>
    <scope>NUCLEOTIDE SEQUENCE [LARGE SCALE MRNA]</scope>
    <source>
        <tissue>Colon</tissue>
        <tissue>Eye</tissue>
    </source>
</reference>
<reference key="6">
    <citation type="journal article" date="2009" name="Anal. Chem.">
        <title>Lys-N and trypsin cover complementary parts of the phosphoproteome in a refined SCX-based approach.</title>
        <authorList>
            <person name="Gauci S."/>
            <person name="Helbig A.O."/>
            <person name="Slijper M."/>
            <person name="Krijgsveld J."/>
            <person name="Heck A.J."/>
            <person name="Mohammed S."/>
        </authorList>
    </citation>
    <scope>ACETYLATION [LARGE SCALE ANALYSIS] AT MET-1</scope>
    <scope>IDENTIFICATION BY MASS SPECTROMETRY [LARGE SCALE ANALYSIS]</scope>
</reference>
<reference key="7">
    <citation type="journal article" date="2009" name="Science">
        <title>Lysine acetylation targets protein complexes and co-regulates major cellular functions.</title>
        <authorList>
            <person name="Choudhary C."/>
            <person name="Kumar C."/>
            <person name="Gnad F."/>
            <person name="Nielsen M.L."/>
            <person name="Rehman M."/>
            <person name="Walther T.C."/>
            <person name="Olsen J.V."/>
            <person name="Mann M."/>
        </authorList>
    </citation>
    <scope>ACETYLATION [LARGE SCALE ANALYSIS] AT LYS-139</scope>
    <scope>IDENTIFICATION BY MASS SPECTROMETRY [LARGE SCALE ANALYSIS]</scope>
</reference>
<reference key="8">
    <citation type="journal article" date="2011" name="BMC Syst. Biol.">
        <title>Initial characterization of the human central proteome.</title>
        <authorList>
            <person name="Burkard T.R."/>
            <person name="Planyavsky M."/>
            <person name="Kaupe I."/>
            <person name="Breitwieser F.P."/>
            <person name="Buerckstuemmer T."/>
            <person name="Bennett K.L."/>
            <person name="Superti-Furga G."/>
            <person name="Colinge J."/>
        </authorList>
    </citation>
    <scope>IDENTIFICATION BY MASS SPECTROMETRY [LARGE SCALE ANALYSIS]</scope>
</reference>
<reference key="9">
    <citation type="journal article" date="2012" name="Mol. Cell. Proteomics">
        <title>Comparative large-scale characterisation of plant vs. mammal proteins reveals similar and idiosyncratic N-alpha acetylation features.</title>
        <authorList>
            <person name="Bienvenut W.V."/>
            <person name="Sumpton D."/>
            <person name="Martinez A."/>
            <person name="Lilla S."/>
            <person name="Espagne C."/>
            <person name="Meinnel T."/>
            <person name="Giglione C."/>
        </authorList>
    </citation>
    <scope>ACETYLATION [LARGE SCALE ANALYSIS] AT MET-1</scope>
    <scope>IDENTIFICATION BY MASS SPECTROMETRY [LARGE SCALE ANALYSIS]</scope>
</reference>
<reference key="10">
    <citation type="journal article" date="2012" name="Proc. Natl. Acad. Sci. U.S.A.">
        <title>N-terminal acetylome analyses and functional insights of the N-terminal acetyltransferase NatB.</title>
        <authorList>
            <person name="Van Damme P."/>
            <person name="Lasa M."/>
            <person name="Polevoda B."/>
            <person name="Gazquez C."/>
            <person name="Elosegui-Artola A."/>
            <person name="Kim D.S."/>
            <person name="De Juan-Pardo E."/>
            <person name="Demeyer K."/>
            <person name="Hole K."/>
            <person name="Larrea E."/>
            <person name="Timmerman E."/>
            <person name="Prieto J."/>
            <person name="Arnesen T."/>
            <person name="Sherman F."/>
            <person name="Gevaert K."/>
            <person name="Aldabe R."/>
        </authorList>
    </citation>
    <scope>ACETYLATION [LARGE SCALE ANALYSIS] AT MET-1</scope>
    <scope>IDENTIFICATION BY MASS SPECTROMETRY [LARGE SCALE ANALYSIS]</scope>
</reference>
<reference key="11">
    <citation type="journal article" date="2013" name="J. Proteome Res.">
        <title>Toward a comprehensive characterization of a human cancer cell phosphoproteome.</title>
        <authorList>
            <person name="Zhou H."/>
            <person name="Di Palma S."/>
            <person name="Preisinger C."/>
            <person name="Peng M."/>
            <person name="Polat A.N."/>
            <person name="Heck A.J."/>
            <person name="Mohammed S."/>
        </authorList>
    </citation>
    <scope>PHOSPHORYLATION [LARGE SCALE ANALYSIS] AT SER-17</scope>
    <scope>IDENTIFICATION BY MASS SPECTROMETRY [LARGE SCALE ANALYSIS]</scope>
    <source>
        <tissue>Erythroleukemia</tissue>
    </source>
</reference>
<reference key="12">
    <citation type="journal article" date="2018" name="Proc. Natl. Acad. Sci. U.S.A.">
        <title>PIP30/FAM192A is a novel regulator of the nuclear proteasome activator PA28gamma.</title>
        <authorList>
            <person name="Jonik-Nowak B."/>
            <person name="Menneteau T."/>
            <person name="Fesquet D."/>
            <person name="Baldin V."/>
            <person name="Bonne-Andrea C."/>
            <person name="Mechali F."/>
            <person name="Fabre B."/>
            <person name="Boisguerin P."/>
            <person name="de Rossi S."/>
            <person name="Henriquet C."/>
            <person name="Pugniere M."/>
            <person name="Ducoux-Petit M."/>
            <person name="Burlet-Schiltz O."/>
            <person name="Lamond A.I."/>
            <person name="Fort P."/>
            <person name="Boulon S."/>
            <person name="Bousquet M.P."/>
            <person name="Coux O."/>
        </authorList>
    </citation>
    <scope>FUNCTION</scope>
    <scope>INTERACTION WITH PSME3</scope>
    <scope>SUBCELLULAR LOCATION</scope>
    <scope>PHOSPHORYLATION AT SER-222 AND SER-228</scope>
    <scope>MUTAGENESIS OF SER-222; 223-ASP--GLU-225; 229-ASP--GLU-231 AND SER-228</scope>
    <scope>IDENTIFICATION BY MASS SPECTROMETRY</scope>
</reference>
<proteinExistence type="evidence at protein level"/>
<comment type="function">
    <text evidence="3">Promotes the association of the proteasome activator complex subunit PSME3 with the 20S proteasome and regulates its activity. Inhibits PSME3-mediated degradation of some proteasome substrates, probably by affecting their diffusion rate into the catalytic chamber of the proteasome. Also inhibits the interaction of PSME3 with COIL, inhibits accumulation of PSME3 in Cajal bodies and positively regulates the number of Cajal bodies in the nucleus.</text>
</comment>
<comment type="subunit">
    <text evidence="3">Interacts (via C-terminus) with both free and 20S proteasome-bound forms of the proteasome activator complex subunit PSME3; the interaction is direct.</text>
</comment>
<comment type="interaction">
    <interactant intactId="EBI-2371956">
        <id>Q9GZU8</id>
    </interactant>
    <interactant intactId="EBI-359352">
        <id>P25786</id>
        <label>PSMA1</label>
    </interactant>
    <organismsDiffer>false</organismsDiffer>
    <experiments>3</experiments>
</comment>
<comment type="interaction">
    <interactant intactId="EBI-2371956">
        <id>Q9GZU8</id>
    </interactant>
    <interactant intactId="EBI-355744">
        <id>Q12933</id>
        <label>TRAF2</label>
    </interactant>
    <organismsDiffer>false</organismsDiffer>
    <experiments>3</experiments>
</comment>
<comment type="subcellular location">
    <subcellularLocation>
        <location evidence="3">Nucleus</location>
    </subcellularLocation>
</comment>
<comment type="PTM">
    <text evidence="3">Phosphorylation by CK2 stabilizes the interaction with PSME3.</text>
</comment>
<accession>Q9GZU8</accession>
<protein>
    <recommendedName>
        <fullName evidence="5">PSME3-interacting protein</fullName>
    </recommendedName>
    <alternativeName>
        <fullName evidence="1">NEFA-interacting nuclear protein NIP30</fullName>
    </alternativeName>
    <alternativeName>
        <fullName evidence="4">PA28G-interacting protein</fullName>
    </alternativeName>
</protein>
<dbReference type="EMBL" id="AF356585">
    <property type="protein sequence ID" value="AAK43697.1"/>
    <property type="molecule type" value="mRNA"/>
</dbReference>
<dbReference type="EMBL" id="AF212249">
    <property type="protein sequence ID" value="AAK14932.1"/>
    <property type="molecule type" value="mRNA"/>
</dbReference>
<dbReference type="EMBL" id="AF271785">
    <property type="protein sequence ID" value="AAG44796.1"/>
    <property type="molecule type" value="mRNA"/>
</dbReference>
<dbReference type="EMBL" id="AK023291">
    <property type="protein sequence ID" value="BAB14512.1"/>
    <property type="molecule type" value="mRNA"/>
</dbReference>
<dbReference type="EMBL" id="AK025452">
    <property type="protein sequence ID" value="BAB15136.1"/>
    <property type="molecule type" value="mRNA"/>
</dbReference>
<dbReference type="EMBL" id="AL834421">
    <property type="protein sequence ID" value="CAD39082.1"/>
    <property type="molecule type" value="mRNA"/>
</dbReference>
<dbReference type="EMBL" id="BC020536">
    <property type="protein sequence ID" value="AAH20536.1"/>
    <property type="molecule type" value="mRNA"/>
</dbReference>
<dbReference type="EMBL" id="BC071952">
    <property type="protein sequence ID" value="AAH71952.1"/>
    <property type="molecule type" value="mRNA"/>
</dbReference>
<dbReference type="CCDS" id="CCDS42168.1"/>
<dbReference type="RefSeq" id="NP_001341007.1">
    <property type="nucleotide sequence ID" value="NM_001354078.1"/>
</dbReference>
<dbReference type="RefSeq" id="NP_001341008.1">
    <property type="nucleotide sequence ID" value="NM_001354079.1"/>
</dbReference>
<dbReference type="RefSeq" id="NP_001341009.1">
    <property type="nucleotide sequence ID" value="NM_001354080.1"/>
</dbReference>
<dbReference type="RefSeq" id="NP_001341010.1">
    <property type="nucleotide sequence ID" value="NM_001354081.2"/>
</dbReference>
<dbReference type="RefSeq" id="NP_001341011.1">
    <property type="nucleotide sequence ID" value="NM_001354082.1"/>
</dbReference>
<dbReference type="RefSeq" id="NP_001341012.1">
    <property type="nucleotide sequence ID" value="NM_001354083.2"/>
</dbReference>
<dbReference type="RefSeq" id="NP_001341013.1">
    <property type="nucleotide sequence ID" value="NM_001354084.2"/>
</dbReference>
<dbReference type="RefSeq" id="NP_001341014.1">
    <property type="nucleotide sequence ID" value="NM_001354085.2"/>
</dbReference>
<dbReference type="RefSeq" id="NP_001341015.1">
    <property type="nucleotide sequence ID" value="NM_001354086.2"/>
</dbReference>
<dbReference type="RefSeq" id="NP_001341016.1">
    <property type="nucleotide sequence ID" value="NM_001354087.1"/>
</dbReference>
<dbReference type="RefSeq" id="NP_001341017.1">
    <property type="nucleotide sequence ID" value="NM_001354088.2"/>
</dbReference>
<dbReference type="RefSeq" id="NP_001341018.1">
    <property type="nucleotide sequence ID" value="NM_001354089.2"/>
</dbReference>
<dbReference type="RefSeq" id="NP_001341019.1">
    <property type="nucleotide sequence ID" value="NM_001354090.2"/>
</dbReference>
<dbReference type="RefSeq" id="NP_001341020.1">
    <property type="nucleotide sequence ID" value="NM_001354091.2"/>
</dbReference>
<dbReference type="RefSeq" id="NP_001341021.1">
    <property type="nucleotide sequence ID" value="NM_001354092.2"/>
</dbReference>
<dbReference type="RefSeq" id="NP_001341023.1">
    <property type="nucleotide sequence ID" value="NM_001354094.2"/>
</dbReference>
<dbReference type="RefSeq" id="NP_001341024.1">
    <property type="nucleotide sequence ID" value="NM_001354095.2"/>
</dbReference>
<dbReference type="RefSeq" id="NP_001341025.1">
    <property type="nucleotide sequence ID" value="NM_001354096.2"/>
</dbReference>
<dbReference type="RefSeq" id="NP_001341026.1">
    <property type="nucleotide sequence ID" value="NM_001354097.2"/>
</dbReference>
<dbReference type="RefSeq" id="NP_001341028.1">
    <property type="nucleotide sequence ID" value="NM_001354099.2"/>
</dbReference>
<dbReference type="RefSeq" id="NP_001341029.1">
    <property type="nucleotide sequence ID" value="NM_001354100.2"/>
</dbReference>
<dbReference type="RefSeq" id="NP_001341030.1">
    <property type="nucleotide sequence ID" value="NM_001354101.2"/>
</dbReference>
<dbReference type="RefSeq" id="NP_001341031.1">
    <property type="nucleotide sequence ID" value="NM_001354102.2"/>
</dbReference>
<dbReference type="RefSeq" id="NP_001341032.1">
    <property type="nucleotide sequence ID" value="NM_001354103.2"/>
</dbReference>
<dbReference type="RefSeq" id="NP_079222.1">
    <property type="nucleotide sequence ID" value="NM_024946.4"/>
</dbReference>
<dbReference type="RefSeq" id="XP_005256217.1">
    <property type="nucleotide sequence ID" value="XM_005256160.2"/>
</dbReference>
<dbReference type="RefSeq" id="XP_005256220.1">
    <property type="nucleotide sequence ID" value="XM_005256163.2"/>
</dbReference>
<dbReference type="RefSeq" id="XP_005256221.1">
    <property type="nucleotide sequence ID" value="XM_005256164.3"/>
</dbReference>
<dbReference type="RefSeq" id="XP_005256222.1">
    <property type="nucleotide sequence ID" value="XM_005256165.2"/>
</dbReference>
<dbReference type="RefSeq" id="XP_011521645.1">
    <property type="nucleotide sequence ID" value="XM_011523343.2"/>
</dbReference>
<dbReference type="RefSeq" id="XP_016879171.1">
    <property type="nucleotide sequence ID" value="XM_017023682.1"/>
</dbReference>
<dbReference type="RefSeq" id="XP_016879172.1">
    <property type="nucleotide sequence ID" value="XM_017023683.1"/>
</dbReference>
<dbReference type="RefSeq" id="XP_016879173.1">
    <property type="nucleotide sequence ID" value="XM_017023684.1"/>
</dbReference>
<dbReference type="RefSeq" id="XP_016879174.1">
    <property type="nucleotide sequence ID" value="XM_017023685.1"/>
</dbReference>
<dbReference type="RefSeq" id="XP_016879175.1">
    <property type="nucleotide sequence ID" value="XM_017023686.1"/>
</dbReference>
<dbReference type="RefSeq" id="XP_016879176.1">
    <property type="nucleotide sequence ID" value="XM_017023687.1"/>
</dbReference>
<dbReference type="RefSeq" id="XP_016879177.1">
    <property type="nucleotide sequence ID" value="XM_017023688.1"/>
</dbReference>
<dbReference type="RefSeq" id="XP_016879178.1">
    <property type="nucleotide sequence ID" value="XM_017023689.1"/>
</dbReference>
<dbReference type="RefSeq" id="XP_016879179.1">
    <property type="nucleotide sequence ID" value="XM_017023690.1"/>
</dbReference>
<dbReference type="RefSeq" id="XP_016879180.1">
    <property type="nucleotide sequence ID" value="XM_017023691.1"/>
</dbReference>
<dbReference type="RefSeq" id="XP_016879181.1">
    <property type="nucleotide sequence ID" value="XM_017023692.1"/>
</dbReference>
<dbReference type="RefSeq" id="XP_016879182.1">
    <property type="nucleotide sequence ID" value="XM_017023693.1"/>
</dbReference>
<dbReference type="RefSeq" id="XP_016879183.1">
    <property type="nucleotide sequence ID" value="XM_017023694.1"/>
</dbReference>
<dbReference type="RefSeq" id="XP_016879184.1">
    <property type="nucleotide sequence ID" value="XM_017023695.1"/>
</dbReference>
<dbReference type="RefSeq" id="XP_016879185.1">
    <property type="nucleotide sequence ID" value="XM_017023696.1"/>
</dbReference>
<dbReference type="RefSeq" id="XP_016879186.1">
    <property type="nucleotide sequence ID" value="XM_017023697.1"/>
</dbReference>
<dbReference type="RefSeq" id="XP_016879187.1">
    <property type="nucleotide sequence ID" value="XM_017023698.1"/>
</dbReference>
<dbReference type="RefSeq" id="XP_016879188.1">
    <property type="nucleotide sequence ID" value="XM_017023699.1"/>
</dbReference>
<dbReference type="RefSeq" id="XP_016879189.1">
    <property type="nucleotide sequence ID" value="XM_017023700.1"/>
</dbReference>
<dbReference type="RefSeq" id="XP_016879190.1">
    <property type="nucleotide sequence ID" value="XM_017023701.1"/>
</dbReference>
<dbReference type="RefSeq" id="XP_016879191.1">
    <property type="nucleotide sequence ID" value="XM_017023702.1"/>
</dbReference>
<dbReference type="RefSeq" id="XP_016879192.1">
    <property type="nucleotide sequence ID" value="XM_017023703.2"/>
</dbReference>
<dbReference type="RefSeq" id="XP_016879193.1">
    <property type="nucleotide sequence ID" value="XM_017023704.1"/>
</dbReference>
<dbReference type="RefSeq" id="XP_024306222.1">
    <property type="nucleotide sequence ID" value="XM_024450454.2"/>
</dbReference>
<dbReference type="RefSeq" id="XP_047290633.1">
    <property type="nucleotide sequence ID" value="XM_047434677.1"/>
</dbReference>
<dbReference type="RefSeq" id="XP_047290634.1">
    <property type="nucleotide sequence ID" value="XM_047434678.1"/>
</dbReference>
<dbReference type="RefSeq" id="XP_047290635.1">
    <property type="nucleotide sequence ID" value="XM_047434679.1"/>
</dbReference>
<dbReference type="RefSeq" id="XP_047290636.1">
    <property type="nucleotide sequence ID" value="XM_047434680.1"/>
</dbReference>
<dbReference type="RefSeq" id="XP_047290637.1">
    <property type="nucleotide sequence ID" value="XM_047434681.1"/>
</dbReference>
<dbReference type="RefSeq" id="XP_054169955.1">
    <property type="nucleotide sequence ID" value="XM_054313980.1"/>
</dbReference>
<dbReference type="RefSeq" id="XP_054169956.1">
    <property type="nucleotide sequence ID" value="XM_054313981.1"/>
</dbReference>
<dbReference type="RefSeq" id="XP_054169957.1">
    <property type="nucleotide sequence ID" value="XM_054313982.1"/>
</dbReference>
<dbReference type="RefSeq" id="XP_054169958.1">
    <property type="nucleotide sequence ID" value="XM_054313983.1"/>
</dbReference>
<dbReference type="RefSeq" id="XP_054169959.1">
    <property type="nucleotide sequence ID" value="XM_054313984.1"/>
</dbReference>
<dbReference type="RefSeq" id="XP_054169960.1">
    <property type="nucleotide sequence ID" value="XM_054313985.1"/>
</dbReference>
<dbReference type="RefSeq" id="XP_054169961.1">
    <property type="nucleotide sequence ID" value="XM_054313986.1"/>
</dbReference>
<dbReference type="RefSeq" id="XP_054169962.1">
    <property type="nucleotide sequence ID" value="XM_054313987.1"/>
</dbReference>
<dbReference type="RefSeq" id="XP_054169963.1">
    <property type="nucleotide sequence ID" value="XM_054313988.1"/>
</dbReference>
<dbReference type="RefSeq" id="XP_054169964.1">
    <property type="nucleotide sequence ID" value="XM_054313989.1"/>
</dbReference>
<dbReference type="PDB" id="7W59">
    <property type="method" value="EM"/>
    <property type="resolution" value="3.60 A"/>
    <property type="chains" value="X=1-254"/>
</dbReference>
<dbReference type="PDB" id="7W5A">
    <property type="method" value="EM"/>
    <property type="resolution" value="3.60 A"/>
    <property type="chains" value="X=1-254"/>
</dbReference>
<dbReference type="PDBsum" id="7W59"/>
<dbReference type="PDBsum" id="7W5A"/>
<dbReference type="EMDB" id="EMD-32317"/>
<dbReference type="EMDB" id="EMD-32319"/>
<dbReference type="SMR" id="Q9GZU8"/>
<dbReference type="BioGRID" id="123067">
    <property type="interactions" value="148"/>
</dbReference>
<dbReference type="FunCoup" id="Q9GZU8">
    <property type="interactions" value="4128"/>
</dbReference>
<dbReference type="IntAct" id="Q9GZU8">
    <property type="interactions" value="96"/>
</dbReference>
<dbReference type="MINT" id="Q9GZU8"/>
<dbReference type="STRING" id="9606.ENSP00000335808"/>
<dbReference type="GlyGen" id="Q9GZU8">
    <property type="glycosylation" value="1 site, 1 O-linked glycan (1 site)"/>
</dbReference>
<dbReference type="iPTMnet" id="Q9GZU8"/>
<dbReference type="PhosphoSitePlus" id="Q9GZU8"/>
<dbReference type="BioMuta" id="FAM192A"/>
<dbReference type="DMDM" id="46577123"/>
<dbReference type="jPOST" id="Q9GZU8"/>
<dbReference type="MassIVE" id="Q9GZU8"/>
<dbReference type="PaxDb" id="9606-ENSP00000335808"/>
<dbReference type="PeptideAtlas" id="Q9GZU8"/>
<dbReference type="ProteomicsDB" id="80152"/>
<dbReference type="Pumba" id="Q9GZU8"/>
<dbReference type="Antibodypedia" id="28815">
    <property type="antibodies" value="51 antibodies from 19 providers"/>
</dbReference>
<dbReference type="DNASU" id="80011"/>
<dbReference type="Ensembl" id="ENST00000309137.13">
    <property type="protein sequence ID" value="ENSP00000335808.6"/>
    <property type="gene ID" value="ENSG00000172775.18"/>
</dbReference>
<dbReference type="Ensembl" id="ENST00000564108.5">
    <property type="protein sequence ID" value="ENSP00000456211.1"/>
    <property type="gene ID" value="ENSG00000172775.18"/>
</dbReference>
<dbReference type="Ensembl" id="ENST00000567439.5">
    <property type="protein sequence ID" value="ENSP00000457850.1"/>
    <property type="gene ID" value="ENSG00000172775.18"/>
</dbReference>
<dbReference type="Ensembl" id="ENST00000569266.5">
    <property type="protein sequence ID" value="ENSP00000457740.1"/>
    <property type="gene ID" value="ENSG00000172775.18"/>
</dbReference>
<dbReference type="GeneID" id="80011"/>
<dbReference type="KEGG" id="hsa:80011"/>
<dbReference type="MANE-Select" id="ENST00000309137.13">
    <property type="protein sequence ID" value="ENSP00000335808.6"/>
    <property type="RefSeq nucleotide sequence ID" value="NM_024946.4"/>
    <property type="RefSeq protein sequence ID" value="NP_079222.1"/>
</dbReference>
<dbReference type="UCSC" id="uc021tiy.1">
    <property type="organism name" value="human"/>
</dbReference>
<dbReference type="AGR" id="HGNC:29856"/>
<dbReference type="CTD" id="80011"/>
<dbReference type="DisGeNET" id="80011"/>
<dbReference type="GeneCards" id="PSME3IP1"/>
<dbReference type="HGNC" id="HGNC:29856">
    <property type="gene designation" value="PSME3IP1"/>
</dbReference>
<dbReference type="HPA" id="ENSG00000172775">
    <property type="expression patterns" value="Low tissue specificity"/>
</dbReference>
<dbReference type="MIM" id="617766">
    <property type="type" value="gene"/>
</dbReference>
<dbReference type="neXtProt" id="NX_Q9GZU8"/>
<dbReference type="OpenTargets" id="ENSG00000172775"/>
<dbReference type="VEuPathDB" id="HostDB:ENSG00000172775"/>
<dbReference type="eggNOG" id="KOG4036">
    <property type="taxonomic scope" value="Eukaryota"/>
</dbReference>
<dbReference type="GeneTree" id="ENSGT00500000044916"/>
<dbReference type="InParanoid" id="Q9GZU8"/>
<dbReference type="OMA" id="HKMNAER"/>
<dbReference type="OrthoDB" id="75807at2759"/>
<dbReference type="PAN-GO" id="Q9GZU8">
    <property type="GO annotations" value="1 GO annotation based on evolutionary models"/>
</dbReference>
<dbReference type="PhylomeDB" id="Q9GZU8"/>
<dbReference type="TreeFam" id="TF314540"/>
<dbReference type="PathwayCommons" id="Q9GZU8"/>
<dbReference type="SignaLink" id="Q9GZU8"/>
<dbReference type="BioGRID-ORCS" id="80011">
    <property type="hits" value="7 hits in 1152 CRISPR screens"/>
</dbReference>
<dbReference type="CD-CODE" id="6F24707C">
    <property type="entry name" value="Cajal body"/>
</dbReference>
<dbReference type="ChiTaRS" id="FAM192A">
    <property type="organism name" value="human"/>
</dbReference>
<dbReference type="GeneWiki" id="NIP30"/>
<dbReference type="GenomeRNAi" id="80011"/>
<dbReference type="Pharos" id="Q9GZU8">
    <property type="development level" value="Tdark"/>
</dbReference>
<dbReference type="PRO" id="PR:Q9GZU8"/>
<dbReference type="Proteomes" id="UP000005640">
    <property type="component" value="Chromosome 16"/>
</dbReference>
<dbReference type="RNAct" id="Q9GZU8">
    <property type="molecule type" value="protein"/>
</dbReference>
<dbReference type="Bgee" id="ENSG00000172775">
    <property type="expression patterns" value="Expressed in calcaneal tendon and 194 other cell types or tissues"/>
</dbReference>
<dbReference type="ExpressionAtlas" id="Q9GZU8">
    <property type="expression patterns" value="baseline and differential"/>
</dbReference>
<dbReference type="GO" id="GO:0043231">
    <property type="term" value="C:intracellular membrane-bounded organelle"/>
    <property type="evidence" value="ECO:0000314"/>
    <property type="project" value="HPA"/>
</dbReference>
<dbReference type="GO" id="GO:0005654">
    <property type="term" value="C:nucleoplasm"/>
    <property type="evidence" value="ECO:0000314"/>
    <property type="project" value="HPA"/>
</dbReference>
<dbReference type="GO" id="GO:0005634">
    <property type="term" value="C:nucleus"/>
    <property type="evidence" value="ECO:0000314"/>
    <property type="project" value="UniProtKB"/>
</dbReference>
<dbReference type="GO" id="GO:1901799">
    <property type="term" value="P:negative regulation of proteasomal protein catabolic process"/>
    <property type="evidence" value="ECO:0000315"/>
    <property type="project" value="UniProtKB"/>
</dbReference>
<dbReference type="GO" id="GO:0032091">
    <property type="term" value="P:negative regulation of protein binding"/>
    <property type="evidence" value="ECO:0000315"/>
    <property type="project" value="UniProtKB"/>
</dbReference>
<dbReference type="InterPro" id="IPR039845">
    <property type="entry name" value="FAM192A"/>
</dbReference>
<dbReference type="InterPro" id="IPR019331">
    <property type="entry name" value="FAM192A/Fyv6_N"/>
</dbReference>
<dbReference type="PANTHER" id="PTHR13495">
    <property type="entry name" value="NEFA-INTERACTING NUCLEAR PROTEIN NIP30"/>
    <property type="match status" value="1"/>
</dbReference>
<dbReference type="PANTHER" id="PTHR13495:SF0">
    <property type="entry name" value="PSME3-INTERACTING PROTEIN"/>
    <property type="match status" value="1"/>
</dbReference>
<dbReference type="Pfam" id="PF10187">
    <property type="entry name" value="FAM192A_Fyv6_N"/>
    <property type="match status" value="1"/>
</dbReference>
<gene>
    <name evidence="6" type="primary">PSME3IP1</name>
    <name evidence="6" type="synonym">C16orf94</name>
    <name type="synonym">FAM192A</name>
    <name evidence="1" type="synonym">NIP30</name>
    <name evidence="4" type="synonym">PIP30</name>
    <name type="ORF">CDA018</name>
    <name type="ORF">CDA10</name>
</gene>
<organism>
    <name type="scientific">Homo sapiens</name>
    <name type="common">Human</name>
    <dbReference type="NCBI Taxonomy" id="9606"/>
    <lineage>
        <taxon>Eukaryota</taxon>
        <taxon>Metazoa</taxon>
        <taxon>Chordata</taxon>
        <taxon>Craniata</taxon>
        <taxon>Vertebrata</taxon>
        <taxon>Euteleostomi</taxon>
        <taxon>Mammalia</taxon>
        <taxon>Eutheria</taxon>
        <taxon>Euarchontoglires</taxon>
        <taxon>Primates</taxon>
        <taxon>Haplorrhini</taxon>
        <taxon>Catarrhini</taxon>
        <taxon>Hominidae</taxon>
        <taxon>Homo</taxon>
    </lineage>
</organism>
<name>PIP30_HUMAN</name>